<proteinExistence type="inferred from homology"/>
<accession>Q3IDI2</accession>
<feature type="chain" id="PRO_0000301082" description="Peptide deformylase">
    <location>
        <begin position="1"/>
        <end position="167"/>
    </location>
</feature>
<feature type="active site" evidence="1">
    <location>
        <position position="134"/>
    </location>
</feature>
<feature type="binding site" evidence="1">
    <location>
        <position position="91"/>
    </location>
    <ligand>
        <name>Fe cation</name>
        <dbReference type="ChEBI" id="CHEBI:24875"/>
    </ligand>
</feature>
<feature type="binding site" evidence="1">
    <location>
        <position position="133"/>
    </location>
    <ligand>
        <name>Fe cation</name>
        <dbReference type="ChEBI" id="CHEBI:24875"/>
    </ligand>
</feature>
<feature type="binding site" evidence="1">
    <location>
        <position position="137"/>
    </location>
    <ligand>
        <name>Fe cation</name>
        <dbReference type="ChEBI" id="CHEBI:24875"/>
    </ligand>
</feature>
<reference key="1">
    <citation type="journal article" date="2005" name="Genome Res.">
        <title>Coping with cold: the genome of the versatile marine Antarctica bacterium Pseudoalteromonas haloplanktis TAC125.</title>
        <authorList>
            <person name="Medigue C."/>
            <person name="Krin E."/>
            <person name="Pascal G."/>
            <person name="Barbe V."/>
            <person name="Bernsel A."/>
            <person name="Bertin P.N."/>
            <person name="Cheung F."/>
            <person name="Cruveiller S."/>
            <person name="D'Amico S."/>
            <person name="Duilio A."/>
            <person name="Fang G."/>
            <person name="Feller G."/>
            <person name="Ho C."/>
            <person name="Mangenot S."/>
            <person name="Marino G."/>
            <person name="Nilsson J."/>
            <person name="Parrilli E."/>
            <person name="Rocha E.P.C."/>
            <person name="Rouy Z."/>
            <person name="Sekowska A."/>
            <person name="Tutino M.L."/>
            <person name="Vallenet D."/>
            <person name="von Heijne G."/>
            <person name="Danchin A."/>
        </authorList>
    </citation>
    <scope>NUCLEOTIDE SEQUENCE [LARGE SCALE GENOMIC DNA]</scope>
    <source>
        <strain>TAC 125</strain>
    </source>
</reference>
<evidence type="ECO:0000255" key="1">
    <source>
        <dbReference type="HAMAP-Rule" id="MF_00163"/>
    </source>
</evidence>
<name>DEF_PSET1</name>
<gene>
    <name evidence="1" type="primary">def</name>
    <name type="ordered locus">PSHAa0023</name>
</gene>
<dbReference type="EC" id="3.5.1.88" evidence="1"/>
<dbReference type="EMBL" id="CR954246">
    <property type="protein sequence ID" value="CAI85137.1"/>
    <property type="molecule type" value="Genomic_DNA"/>
</dbReference>
<dbReference type="SMR" id="Q3IDI2"/>
<dbReference type="STRING" id="326442.PSHAa0023"/>
<dbReference type="KEGG" id="pha:PSHAa0023"/>
<dbReference type="PATRIC" id="fig|326442.8.peg.25"/>
<dbReference type="eggNOG" id="COG0242">
    <property type="taxonomic scope" value="Bacteria"/>
</dbReference>
<dbReference type="HOGENOM" id="CLU_061901_2_1_6"/>
<dbReference type="BioCyc" id="PHAL326442:PSHA_RS00115-MONOMER"/>
<dbReference type="Proteomes" id="UP000006843">
    <property type="component" value="Chromosome I"/>
</dbReference>
<dbReference type="GO" id="GO:0046872">
    <property type="term" value="F:metal ion binding"/>
    <property type="evidence" value="ECO:0007669"/>
    <property type="project" value="UniProtKB-KW"/>
</dbReference>
<dbReference type="GO" id="GO:0042586">
    <property type="term" value="F:peptide deformylase activity"/>
    <property type="evidence" value="ECO:0007669"/>
    <property type="project" value="UniProtKB-UniRule"/>
</dbReference>
<dbReference type="GO" id="GO:0043686">
    <property type="term" value="P:co-translational protein modification"/>
    <property type="evidence" value="ECO:0007669"/>
    <property type="project" value="TreeGrafter"/>
</dbReference>
<dbReference type="GO" id="GO:0006412">
    <property type="term" value="P:translation"/>
    <property type="evidence" value="ECO:0007669"/>
    <property type="project" value="UniProtKB-UniRule"/>
</dbReference>
<dbReference type="CDD" id="cd00487">
    <property type="entry name" value="Pep_deformylase"/>
    <property type="match status" value="1"/>
</dbReference>
<dbReference type="FunFam" id="3.90.45.10:FF:000001">
    <property type="entry name" value="Peptide deformylase"/>
    <property type="match status" value="1"/>
</dbReference>
<dbReference type="Gene3D" id="3.90.45.10">
    <property type="entry name" value="Peptide deformylase"/>
    <property type="match status" value="1"/>
</dbReference>
<dbReference type="HAMAP" id="MF_00163">
    <property type="entry name" value="Pep_deformylase"/>
    <property type="match status" value="1"/>
</dbReference>
<dbReference type="InterPro" id="IPR023635">
    <property type="entry name" value="Peptide_deformylase"/>
</dbReference>
<dbReference type="InterPro" id="IPR036821">
    <property type="entry name" value="Peptide_deformylase_sf"/>
</dbReference>
<dbReference type="NCBIfam" id="TIGR00079">
    <property type="entry name" value="pept_deformyl"/>
    <property type="match status" value="1"/>
</dbReference>
<dbReference type="NCBIfam" id="NF001159">
    <property type="entry name" value="PRK00150.1-3"/>
    <property type="match status" value="1"/>
</dbReference>
<dbReference type="PANTHER" id="PTHR10458">
    <property type="entry name" value="PEPTIDE DEFORMYLASE"/>
    <property type="match status" value="1"/>
</dbReference>
<dbReference type="PANTHER" id="PTHR10458:SF21">
    <property type="entry name" value="PEPTIDE DEFORMYLASE"/>
    <property type="match status" value="1"/>
</dbReference>
<dbReference type="Pfam" id="PF01327">
    <property type="entry name" value="Pep_deformylase"/>
    <property type="match status" value="1"/>
</dbReference>
<dbReference type="PIRSF" id="PIRSF004749">
    <property type="entry name" value="Pep_def"/>
    <property type="match status" value="1"/>
</dbReference>
<dbReference type="PRINTS" id="PR01576">
    <property type="entry name" value="PDEFORMYLASE"/>
</dbReference>
<dbReference type="SUPFAM" id="SSF56420">
    <property type="entry name" value="Peptide deformylase"/>
    <property type="match status" value="1"/>
</dbReference>
<protein>
    <recommendedName>
        <fullName evidence="1">Peptide deformylase</fullName>
        <shortName evidence="1">PDF</shortName>
        <ecNumber evidence="1">3.5.1.88</ecNumber>
    </recommendedName>
    <alternativeName>
        <fullName evidence="1">Polypeptide deformylase</fullName>
    </alternativeName>
</protein>
<comment type="function">
    <text evidence="1">Removes the formyl group from the N-terminal Met of newly synthesized proteins. Requires at least a dipeptide for an efficient rate of reaction. N-terminal L-methionine is a prerequisite for activity but the enzyme has broad specificity at other positions.</text>
</comment>
<comment type="catalytic activity">
    <reaction evidence="1">
        <text>N-terminal N-formyl-L-methionyl-[peptide] + H2O = N-terminal L-methionyl-[peptide] + formate</text>
        <dbReference type="Rhea" id="RHEA:24420"/>
        <dbReference type="Rhea" id="RHEA-COMP:10639"/>
        <dbReference type="Rhea" id="RHEA-COMP:10640"/>
        <dbReference type="ChEBI" id="CHEBI:15377"/>
        <dbReference type="ChEBI" id="CHEBI:15740"/>
        <dbReference type="ChEBI" id="CHEBI:49298"/>
        <dbReference type="ChEBI" id="CHEBI:64731"/>
        <dbReference type="EC" id="3.5.1.88"/>
    </reaction>
</comment>
<comment type="cofactor">
    <cofactor evidence="1">
        <name>Fe(2+)</name>
        <dbReference type="ChEBI" id="CHEBI:29033"/>
    </cofactor>
    <text evidence="1">Binds 1 Fe(2+) ion.</text>
</comment>
<comment type="similarity">
    <text evidence="1">Belongs to the polypeptide deformylase family.</text>
</comment>
<organism>
    <name type="scientific">Pseudoalteromonas translucida (strain TAC 125)</name>
    <dbReference type="NCBI Taxonomy" id="326442"/>
    <lineage>
        <taxon>Bacteria</taxon>
        <taxon>Pseudomonadati</taxon>
        <taxon>Pseudomonadota</taxon>
        <taxon>Gammaproteobacteria</taxon>
        <taxon>Alteromonadales</taxon>
        <taxon>Pseudoalteromonadaceae</taxon>
        <taxon>Pseudoalteromonas</taxon>
    </lineage>
</organism>
<keyword id="KW-0378">Hydrolase</keyword>
<keyword id="KW-0408">Iron</keyword>
<keyword id="KW-0479">Metal-binding</keyword>
<keyword id="KW-0648">Protein biosynthesis</keyword>
<keyword id="KW-1185">Reference proteome</keyword>
<sequence length="167" mass="18964">MATLEVLRFPDERLRTIAQEVAHVDDQVRVIIKDMLETMYDENGIGLAATQVNIHQRIVVIDVSEERNEPLVLINPQIIKKDGTTVSEEGCLSVPNSYAKVDRAETVTVAALNEQGEEFVLDADELLAICIQHELDHLQGKLFIDYLSPLKRQRIRKKLEKEAKFAE</sequence>